<proteinExistence type="inferred from homology"/>
<accession>Q4A012</accession>
<keyword id="KW-1003">Cell membrane</keyword>
<keyword id="KW-0204">Cytolysis</keyword>
<keyword id="KW-0472">Membrane</keyword>
<keyword id="KW-1185">Reference proteome</keyword>
<keyword id="KW-0812">Transmembrane</keyword>
<keyword id="KW-1133">Transmembrane helix</keyword>
<sequence>MIEHLAINTPYFGILLSLIPFIIATFLFKKTNGFFLFTPLFVSMVVGIAFLKLTGIDYANYKIGGDIINFFLEPATICFAIPLYKRRDVLKKYWKQILGGITLGTTAALVCIYLIAEAFQFSNGIIASMLPQGATTAIALPVSADIGGIKELTSLAVILNGVIIYALGSKLIKLFNITNPIARGLALGTSGHSLGVSSAQEFGETEASMASISLVIVGVIVVIVAPILATLLL</sequence>
<comment type="function">
    <text evidence="1">Inhibits the expression or activity of extracellular murein hydrolases by interacting, possibly with LrgA, with the holin-like proteins CidA and/or CidB. The LrgAB and CidAB proteins may affect the proton motive force of the membrane. May be involved in programmed cell death (PCD), possibly triggering PCD in response to antibiotics and environmental stresses.</text>
</comment>
<comment type="subcellular location">
    <subcellularLocation>
        <location evidence="1">Cell membrane</location>
        <topology evidence="1">Multi-pass membrane protein</topology>
    </subcellularLocation>
</comment>
<comment type="similarity">
    <text evidence="1">Belongs to the CidB/LrgB family. LrgB subfamily.</text>
</comment>
<reference key="1">
    <citation type="journal article" date="2005" name="Proc. Natl. Acad. Sci. U.S.A.">
        <title>Whole genome sequence of Staphylococcus saprophyticus reveals the pathogenesis of uncomplicated urinary tract infection.</title>
        <authorList>
            <person name="Kuroda M."/>
            <person name="Yamashita A."/>
            <person name="Hirakawa H."/>
            <person name="Kumano M."/>
            <person name="Morikawa K."/>
            <person name="Higashide M."/>
            <person name="Maruyama A."/>
            <person name="Inose Y."/>
            <person name="Matoba K."/>
            <person name="Toh H."/>
            <person name="Kuhara S."/>
            <person name="Hattori M."/>
            <person name="Ohta T."/>
        </authorList>
    </citation>
    <scope>NUCLEOTIDE SEQUENCE [LARGE SCALE GENOMIC DNA]</scope>
    <source>
        <strain>ATCC 15305 / DSM 20229 / NCIMB 8711 / NCTC 7292 / S-41</strain>
    </source>
</reference>
<protein>
    <recommendedName>
        <fullName evidence="1">Antiholin-like protein LrgB</fullName>
    </recommendedName>
</protein>
<evidence type="ECO:0000255" key="1">
    <source>
        <dbReference type="HAMAP-Rule" id="MF_01142"/>
    </source>
</evidence>
<dbReference type="EMBL" id="AP008934">
    <property type="protein sequence ID" value="BAE17606.1"/>
    <property type="molecule type" value="Genomic_DNA"/>
</dbReference>
<dbReference type="RefSeq" id="WP_002482419.1">
    <property type="nucleotide sequence ID" value="NZ_MTGA01000036.1"/>
</dbReference>
<dbReference type="GeneID" id="3616209"/>
<dbReference type="KEGG" id="ssp:SSP0461"/>
<dbReference type="PATRIC" id="fig|342451.11.peg.466"/>
<dbReference type="eggNOG" id="COG1346">
    <property type="taxonomic scope" value="Bacteria"/>
</dbReference>
<dbReference type="HOGENOM" id="CLU_082099_1_0_9"/>
<dbReference type="OrthoDB" id="9811701at2"/>
<dbReference type="Proteomes" id="UP000006371">
    <property type="component" value="Chromosome"/>
</dbReference>
<dbReference type="GO" id="GO:0005886">
    <property type="term" value="C:plasma membrane"/>
    <property type="evidence" value="ECO:0007669"/>
    <property type="project" value="UniProtKB-SubCell"/>
</dbReference>
<dbReference type="GO" id="GO:0019835">
    <property type="term" value="P:cytolysis"/>
    <property type="evidence" value="ECO:0007669"/>
    <property type="project" value="UniProtKB-UniRule"/>
</dbReference>
<dbReference type="GO" id="GO:0031640">
    <property type="term" value="P:killing of cells of another organism"/>
    <property type="evidence" value="ECO:0007669"/>
    <property type="project" value="UniProtKB-KW"/>
</dbReference>
<dbReference type="GO" id="GO:0012501">
    <property type="term" value="P:programmed cell death"/>
    <property type="evidence" value="ECO:0007669"/>
    <property type="project" value="UniProtKB-UniRule"/>
</dbReference>
<dbReference type="HAMAP" id="MF_01142">
    <property type="entry name" value="LrgB"/>
    <property type="match status" value="1"/>
</dbReference>
<dbReference type="InterPro" id="IPR024891">
    <property type="entry name" value="Antiholin-like_LrgB"/>
</dbReference>
<dbReference type="InterPro" id="IPR007300">
    <property type="entry name" value="CidB/LrgB"/>
</dbReference>
<dbReference type="NCBIfam" id="NF003291">
    <property type="entry name" value="PRK04288.1"/>
    <property type="match status" value="1"/>
</dbReference>
<dbReference type="PANTHER" id="PTHR30249:SF0">
    <property type="entry name" value="PLASTIDAL GLYCOLATE_GLYCERATE TRANSLOCATOR 1, CHLOROPLASTIC"/>
    <property type="match status" value="1"/>
</dbReference>
<dbReference type="PANTHER" id="PTHR30249">
    <property type="entry name" value="PUTATIVE SEROTONIN TRANSPORTER"/>
    <property type="match status" value="1"/>
</dbReference>
<dbReference type="Pfam" id="PF04172">
    <property type="entry name" value="LrgB"/>
    <property type="match status" value="1"/>
</dbReference>
<feature type="chain" id="PRO_0000217065" description="Antiholin-like protein LrgB">
    <location>
        <begin position="1"/>
        <end position="233"/>
    </location>
</feature>
<feature type="transmembrane region" description="Helical" evidence="1">
    <location>
        <begin position="7"/>
        <end position="27"/>
    </location>
</feature>
<feature type="transmembrane region" description="Helical" evidence="1">
    <location>
        <begin position="33"/>
        <end position="53"/>
    </location>
</feature>
<feature type="transmembrane region" description="Helical" evidence="1">
    <location>
        <begin position="63"/>
        <end position="83"/>
    </location>
</feature>
<feature type="transmembrane region" description="Helical" evidence="1">
    <location>
        <begin position="97"/>
        <end position="117"/>
    </location>
</feature>
<feature type="transmembrane region" description="Helical" evidence="1">
    <location>
        <begin position="124"/>
        <end position="144"/>
    </location>
</feature>
<feature type="transmembrane region" description="Helical" evidence="1">
    <location>
        <begin position="152"/>
        <end position="172"/>
    </location>
</feature>
<feature type="transmembrane region" description="Helical" evidence="1">
    <location>
        <begin position="212"/>
        <end position="232"/>
    </location>
</feature>
<gene>
    <name evidence="1" type="primary">lrgB</name>
    <name type="ordered locus">SSP0461</name>
</gene>
<name>LRGB_STAS1</name>
<organism>
    <name type="scientific">Staphylococcus saprophyticus subsp. saprophyticus (strain ATCC 15305 / DSM 20229 / NCIMB 8711 / NCTC 7292 / S-41)</name>
    <dbReference type="NCBI Taxonomy" id="342451"/>
    <lineage>
        <taxon>Bacteria</taxon>
        <taxon>Bacillati</taxon>
        <taxon>Bacillota</taxon>
        <taxon>Bacilli</taxon>
        <taxon>Bacillales</taxon>
        <taxon>Staphylococcaceae</taxon>
        <taxon>Staphylococcus</taxon>
    </lineage>
</organism>